<comment type="function">
    <text evidence="1">Attaches a formyl group to the free amino group of methionyl-tRNA(fMet). The formyl group appears to play a dual role in the initiator identity of N-formylmethionyl-tRNA by promoting its recognition by IF2 and preventing the misappropriation of this tRNA by the elongation apparatus.</text>
</comment>
<comment type="catalytic activity">
    <reaction evidence="1">
        <text>L-methionyl-tRNA(fMet) + (6R)-10-formyltetrahydrofolate = N-formyl-L-methionyl-tRNA(fMet) + (6S)-5,6,7,8-tetrahydrofolate + H(+)</text>
        <dbReference type="Rhea" id="RHEA:24380"/>
        <dbReference type="Rhea" id="RHEA-COMP:9952"/>
        <dbReference type="Rhea" id="RHEA-COMP:9953"/>
        <dbReference type="ChEBI" id="CHEBI:15378"/>
        <dbReference type="ChEBI" id="CHEBI:57453"/>
        <dbReference type="ChEBI" id="CHEBI:78530"/>
        <dbReference type="ChEBI" id="CHEBI:78844"/>
        <dbReference type="ChEBI" id="CHEBI:195366"/>
        <dbReference type="EC" id="2.1.2.9"/>
    </reaction>
</comment>
<comment type="similarity">
    <text evidence="1">Belongs to the Fmt family.</text>
</comment>
<feature type="chain" id="PRO_1000098384" description="Methionyl-tRNA formyltransferase">
    <location>
        <begin position="1"/>
        <end position="330"/>
    </location>
</feature>
<feature type="binding site" evidence="1">
    <location>
        <begin position="121"/>
        <end position="124"/>
    </location>
    <ligand>
        <name>(6S)-5,6,7,8-tetrahydrofolate</name>
        <dbReference type="ChEBI" id="CHEBI:57453"/>
    </ligand>
</feature>
<reference key="1">
    <citation type="submission" date="2008-02" db="EMBL/GenBank/DDBJ databases">
        <title>Complete sequence of chromosome 1 of Burkholderia cenocepacia MC0-3.</title>
        <authorList>
            <person name="Copeland A."/>
            <person name="Lucas S."/>
            <person name="Lapidus A."/>
            <person name="Barry K."/>
            <person name="Bruce D."/>
            <person name="Goodwin L."/>
            <person name="Glavina del Rio T."/>
            <person name="Dalin E."/>
            <person name="Tice H."/>
            <person name="Pitluck S."/>
            <person name="Chain P."/>
            <person name="Malfatti S."/>
            <person name="Shin M."/>
            <person name="Vergez L."/>
            <person name="Schmutz J."/>
            <person name="Larimer F."/>
            <person name="Land M."/>
            <person name="Hauser L."/>
            <person name="Kyrpides N."/>
            <person name="Mikhailova N."/>
            <person name="Tiedje J."/>
            <person name="Richardson P."/>
        </authorList>
    </citation>
    <scope>NUCLEOTIDE SEQUENCE [LARGE SCALE GENOMIC DNA]</scope>
    <source>
        <strain>MC0-3</strain>
    </source>
</reference>
<protein>
    <recommendedName>
        <fullName evidence="1">Methionyl-tRNA formyltransferase</fullName>
        <ecNumber evidence="1">2.1.2.9</ecNumber>
    </recommendedName>
</protein>
<proteinExistence type="inferred from homology"/>
<gene>
    <name evidence="1" type="primary">fmt</name>
    <name type="ordered locus">Bcenmc03_3142</name>
</gene>
<keyword id="KW-0648">Protein biosynthesis</keyword>
<keyword id="KW-0808">Transferase</keyword>
<dbReference type="EC" id="2.1.2.9" evidence="1"/>
<dbReference type="EMBL" id="CP000958">
    <property type="protein sequence ID" value="ACA92300.1"/>
    <property type="molecule type" value="Genomic_DNA"/>
</dbReference>
<dbReference type="RefSeq" id="WP_012329437.1">
    <property type="nucleotide sequence ID" value="NC_010508.1"/>
</dbReference>
<dbReference type="SMR" id="B1K0J5"/>
<dbReference type="GeneID" id="83049924"/>
<dbReference type="KEGG" id="bcm:Bcenmc03_3142"/>
<dbReference type="HOGENOM" id="CLU_033347_1_2_4"/>
<dbReference type="Proteomes" id="UP000002169">
    <property type="component" value="Chromosome 1"/>
</dbReference>
<dbReference type="GO" id="GO:0005829">
    <property type="term" value="C:cytosol"/>
    <property type="evidence" value="ECO:0007669"/>
    <property type="project" value="TreeGrafter"/>
</dbReference>
<dbReference type="GO" id="GO:0004479">
    <property type="term" value="F:methionyl-tRNA formyltransferase activity"/>
    <property type="evidence" value="ECO:0007669"/>
    <property type="project" value="UniProtKB-UniRule"/>
</dbReference>
<dbReference type="CDD" id="cd08646">
    <property type="entry name" value="FMT_core_Met-tRNA-FMT_N"/>
    <property type="match status" value="1"/>
</dbReference>
<dbReference type="CDD" id="cd08704">
    <property type="entry name" value="Met_tRNA_FMT_C"/>
    <property type="match status" value="1"/>
</dbReference>
<dbReference type="FunFam" id="3.40.50.12230:FF:000001">
    <property type="entry name" value="Methionyl-tRNA formyltransferase"/>
    <property type="match status" value="1"/>
</dbReference>
<dbReference type="Gene3D" id="3.10.25.10">
    <property type="entry name" value="Formyl transferase, C-terminal domain"/>
    <property type="match status" value="1"/>
</dbReference>
<dbReference type="Gene3D" id="3.40.50.170">
    <property type="entry name" value="Formyl transferase, N-terminal domain"/>
    <property type="match status" value="1"/>
</dbReference>
<dbReference type="HAMAP" id="MF_00182">
    <property type="entry name" value="Formyl_trans"/>
    <property type="match status" value="1"/>
</dbReference>
<dbReference type="InterPro" id="IPR005794">
    <property type="entry name" value="Fmt"/>
</dbReference>
<dbReference type="InterPro" id="IPR005793">
    <property type="entry name" value="Formyl_trans_C"/>
</dbReference>
<dbReference type="InterPro" id="IPR037022">
    <property type="entry name" value="Formyl_trans_C_sf"/>
</dbReference>
<dbReference type="InterPro" id="IPR002376">
    <property type="entry name" value="Formyl_transf_N"/>
</dbReference>
<dbReference type="InterPro" id="IPR036477">
    <property type="entry name" value="Formyl_transf_N_sf"/>
</dbReference>
<dbReference type="InterPro" id="IPR011034">
    <property type="entry name" value="Formyl_transferase-like_C_sf"/>
</dbReference>
<dbReference type="InterPro" id="IPR001555">
    <property type="entry name" value="GART_AS"/>
</dbReference>
<dbReference type="InterPro" id="IPR044135">
    <property type="entry name" value="Met-tRNA-FMT_C"/>
</dbReference>
<dbReference type="InterPro" id="IPR041711">
    <property type="entry name" value="Met-tRNA-FMT_N"/>
</dbReference>
<dbReference type="NCBIfam" id="TIGR00460">
    <property type="entry name" value="fmt"/>
    <property type="match status" value="1"/>
</dbReference>
<dbReference type="PANTHER" id="PTHR11138">
    <property type="entry name" value="METHIONYL-TRNA FORMYLTRANSFERASE"/>
    <property type="match status" value="1"/>
</dbReference>
<dbReference type="PANTHER" id="PTHR11138:SF5">
    <property type="entry name" value="METHIONYL-TRNA FORMYLTRANSFERASE, MITOCHONDRIAL"/>
    <property type="match status" value="1"/>
</dbReference>
<dbReference type="Pfam" id="PF02911">
    <property type="entry name" value="Formyl_trans_C"/>
    <property type="match status" value="1"/>
</dbReference>
<dbReference type="Pfam" id="PF00551">
    <property type="entry name" value="Formyl_trans_N"/>
    <property type="match status" value="1"/>
</dbReference>
<dbReference type="SUPFAM" id="SSF50486">
    <property type="entry name" value="FMT C-terminal domain-like"/>
    <property type="match status" value="1"/>
</dbReference>
<dbReference type="SUPFAM" id="SSF53328">
    <property type="entry name" value="Formyltransferase"/>
    <property type="match status" value="1"/>
</dbReference>
<dbReference type="PROSITE" id="PS00373">
    <property type="entry name" value="GART"/>
    <property type="match status" value="1"/>
</dbReference>
<accession>B1K0J5</accession>
<evidence type="ECO:0000255" key="1">
    <source>
        <dbReference type="HAMAP-Rule" id="MF_00182"/>
    </source>
</evidence>
<organism>
    <name type="scientific">Burkholderia orbicola (strain MC0-3)</name>
    <dbReference type="NCBI Taxonomy" id="406425"/>
    <lineage>
        <taxon>Bacteria</taxon>
        <taxon>Pseudomonadati</taxon>
        <taxon>Pseudomonadota</taxon>
        <taxon>Betaproteobacteria</taxon>
        <taxon>Burkholderiales</taxon>
        <taxon>Burkholderiaceae</taxon>
        <taxon>Burkholderia</taxon>
        <taxon>Burkholderia cepacia complex</taxon>
        <taxon>Burkholderia orbicola</taxon>
    </lineage>
</organism>
<name>FMT_BURO0</name>
<sequence>MTHTLRVIFAGTPEFAAAALAAIHKAGFPVPLVLTQPDRPAGRGMKLQASAVKRYAVEHGMAVAQPPSLRRAGKYPAEAADAIELLRTTPHDVMVVAAYGLLLPQEVLDIPRAGCINIHASLLPRWRGAAPIHRAIEAGDAETGVTLMQMDVGLDTGAMIEEARIAIAPDDTTATLHDRLAAAGARLIVDALVRLERDGTLPATPQPADGVTYAEKIGKHEAALDWRKPADVLARQVRAFDPFPGGVATLDGAAIKLWAAEPVAAHGTIATAAPGTIVEAAPEGVVVACGSGALRVTQLQKPGGKRLPAREFLAGSPLAAGQRFALPDVD</sequence>